<organism>
    <name type="scientific">Salmonella paratyphi B (strain ATCC BAA-1250 / SPB7)</name>
    <dbReference type="NCBI Taxonomy" id="1016998"/>
    <lineage>
        <taxon>Bacteria</taxon>
        <taxon>Pseudomonadati</taxon>
        <taxon>Pseudomonadota</taxon>
        <taxon>Gammaproteobacteria</taxon>
        <taxon>Enterobacterales</taxon>
        <taxon>Enterobacteriaceae</taxon>
        <taxon>Salmonella</taxon>
    </lineage>
</organism>
<name>MDTB_SALPB</name>
<comment type="subunit">
    <text evidence="1">Part of a tripartite efflux system composed of MdtA, MdtB and MdtC. MdtB forms a heteromultimer with MdtC.</text>
</comment>
<comment type="subcellular location">
    <subcellularLocation>
        <location evidence="1">Cell inner membrane</location>
        <topology evidence="1">Multi-pass membrane protein</topology>
    </subcellularLocation>
</comment>
<comment type="similarity">
    <text evidence="1">Belongs to the resistance-nodulation-cell division (RND) (TC 2.A.6) family. MdtB subfamily.</text>
</comment>
<sequence>MQVLPPGSTGGPSRLFILRPVATTLLMAAILLAGIIGYRFLPVAALPEVDYPTIQVVTLYPGASPDVMTSAVTAPLERQFGQMSGLKQMSSQSSGGASVVTLQFQLTLPLDVAEQEVQAAINAATNLLPSDLPNPPIYSKVNPADPPIMTLAVTSNAMPMTQVEDMVETRVAQKISQVSGVGLVTLAGGQRPAVRVKLNAQAIAALGLTSETVRTAITGANVNSAKGSLDGPERAVTLSANDQMQSADEYRRLIIAYQNGAPVRLGDVATVEQGAENSWLGAWANQAPAIVMNVQRQPGANIIATADSIRQMLPQLTESLPKSVKVTVLSDRTTNIRASVRDTQFELMLAIALVVMIIYLFLRNIPATIIPGVAVPLSLIGTFAVMVFLDFSINNLTLMALTIATGFVVDDAIVVIENISRYIEKGEKPLAAALKGAGEIGFTIISLTFSLIAVLIPLLFMGDIVGRLFREFAVTLAVAILISAVVSLTLTPMMCARMLSQQSLRKQNRFSRACERMFDRVIASYGRGLAKVLNHPWLTLSVAFATLLLSVMLWIVIPKGFFPVQDNGIIQGTLQAPQSSSYASMAQRQRQVAERILQDPAVQSLTTFVGVDGANPTLNSARLQINLKPLDARDDRVQQVISRLQTAVATIPGVALYLQPTQDLTIDTQVSRTQYQFTLQATTLDALSHWVPKLQNALQSLPQLSEVSSDWQDRGLAAWVNVDRDSASRLGISMADVDNALYNAFGQRLISTIYTQANQYRVVLEHNTASTPGLAALETIRLTSRDGGTVPLSAIARIEQRFAPLSINHLDQFPVTTFSFNVPEGYSLGDAVQAILDTEKTLALPADITTQFQGSTLAFQAALGSTVWLIVAAVVAMYIVLGVLYESFIHPITILSTLPTAGVGALLALIIAGSELDIIAIIGIILLIGIVKKNAIMMIDFALAAEREQGMSPRDAIFQACLLRFRPILMTTLAALLGALPLMLSTGVGAELRRPLGIAMVGGLLVSQVLTLFTTPVIYLLFDRLSLYVKSRFPRHKEEA</sequence>
<dbReference type="EMBL" id="CP000886">
    <property type="protein sequence ID" value="ABX66320.1"/>
    <property type="molecule type" value="Genomic_DNA"/>
</dbReference>
<dbReference type="RefSeq" id="WP_001197786.1">
    <property type="nucleotide sequence ID" value="NC_010102.1"/>
</dbReference>
<dbReference type="SMR" id="A9N7L2"/>
<dbReference type="KEGG" id="spq:SPAB_00897"/>
<dbReference type="PATRIC" id="fig|1016998.12.peg.842"/>
<dbReference type="HOGENOM" id="CLU_002755_1_1_6"/>
<dbReference type="BioCyc" id="SENT1016998:SPAB_RS03710-MONOMER"/>
<dbReference type="Proteomes" id="UP000008556">
    <property type="component" value="Chromosome"/>
</dbReference>
<dbReference type="GO" id="GO:0005886">
    <property type="term" value="C:plasma membrane"/>
    <property type="evidence" value="ECO:0007669"/>
    <property type="project" value="UniProtKB-SubCell"/>
</dbReference>
<dbReference type="GO" id="GO:0042910">
    <property type="term" value="F:xenobiotic transmembrane transporter activity"/>
    <property type="evidence" value="ECO:0007669"/>
    <property type="project" value="TreeGrafter"/>
</dbReference>
<dbReference type="FunFam" id="1.20.1640.10:FF:000001">
    <property type="entry name" value="Efflux pump membrane transporter"/>
    <property type="match status" value="1"/>
</dbReference>
<dbReference type="FunFam" id="3.30.70.1430:FF:000001">
    <property type="entry name" value="Efflux pump membrane transporter"/>
    <property type="match status" value="1"/>
</dbReference>
<dbReference type="FunFam" id="3.30.2090.10:FF:000003">
    <property type="entry name" value="Multidrug resistance protein MdtB"/>
    <property type="match status" value="1"/>
</dbReference>
<dbReference type="Gene3D" id="3.30.70.1430">
    <property type="entry name" value="Multidrug efflux transporter AcrB pore domain"/>
    <property type="match status" value="2"/>
</dbReference>
<dbReference type="Gene3D" id="3.30.70.1440">
    <property type="entry name" value="Multidrug efflux transporter AcrB pore domain"/>
    <property type="match status" value="1"/>
</dbReference>
<dbReference type="Gene3D" id="3.30.70.1320">
    <property type="entry name" value="Multidrug efflux transporter AcrB pore domain like"/>
    <property type="match status" value="1"/>
</dbReference>
<dbReference type="Gene3D" id="3.30.2090.10">
    <property type="entry name" value="Multidrug efflux transporter AcrB TolC docking domain, DN and DC subdomains"/>
    <property type="match status" value="2"/>
</dbReference>
<dbReference type="Gene3D" id="1.20.1640.10">
    <property type="entry name" value="Multidrug efflux transporter AcrB transmembrane domain"/>
    <property type="match status" value="2"/>
</dbReference>
<dbReference type="HAMAP" id="MF_01423">
    <property type="entry name" value="MdtB"/>
    <property type="match status" value="1"/>
</dbReference>
<dbReference type="InterPro" id="IPR027463">
    <property type="entry name" value="AcrB_DN_DC_subdom"/>
</dbReference>
<dbReference type="InterPro" id="IPR001036">
    <property type="entry name" value="Acrflvin-R"/>
</dbReference>
<dbReference type="InterPro" id="IPR022831">
    <property type="entry name" value="Multidrug-R_MdtB"/>
</dbReference>
<dbReference type="NCBIfam" id="NF007798">
    <property type="entry name" value="PRK10503.1"/>
    <property type="match status" value="1"/>
</dbReference>
<dbReference type="NCBIfam" id="NF033617">
    <property type="entry name" value="RND_permease_2"/>
    <property type="match status" value="1"/>
</dbReference>
<dbReference type="PANTHER" id="PTHR32063">
    <property type="match status" value="1"/>
</dbReference>
<dbReference type="PANTHER" id="PTHR32063:SF21">
    <property type="entry name" value="MULTIDRUG RESISTANCE PROTEIN MDTB"/>
    <property type="match status" value="1"/>
</dbReference>
<dbReference type="Pfam" id="PF00873">
    <property type="entry name" value="ACR_tran"/>
    <property type="match status" value="1"/>
</dbReference>
<dbReference type="PRINTS" id="PR00702">
    <property type="entry name" value="ACRIFLAVINRP"/>
</dbReference>
<dbReference type="SUPFAM" id="SSF82693">
    <property type="entry name" value="Multidrug efflux transporter AcrB pore domain, PN1, PN2, PC1 and PC2 subdomains"/>
    <property type="match status" value="3"/>
</dbReference>
<dbReference type="SUPFAM" id="SSF82714">
    <property type="entry name" value="Multidrug efflux transporter AcrB TolC docking domain, DN and DC subdomains"/>
    <property type="match status" value="2"/>
</dbReference>
<dbReference type="SUPFAM" id="SSF82866">
    <property type="entry name" value="Multidrug efflux transporter AcrB transmembrane domain"/>
    <property type="match status" value="2"/>
</dbReference>
<evidence type="ECO:0000255" key="1">
    <source>
        <dbReference type="HAMAP-Rule" id="MF_01423"/>
    </source>
</evidence>
<proteinExistence type="inferred from homology"/>
<keyword id="KW-0997">Cell inner membrane</keyword>
<keyword id="KW-1003">Cell membrane</keyword>
<keyword id="KW-0472">Membrane</keyword>
<keyword id="KW-0812">Transmembrane</keyword>
<keyword id="KW-1133">Transmembrane helix</keyword>
<keyword id="KW-0813">Transport</keyword>
<reference key="1">
    <citation type="submission" date="2007-11" db="EMBL/GenBank/DDBJ databases">
        <authorList>
            <consortium name="The Salmonella enterica serovar Paratyphi B Genome Sequencing Project"/>
            <person name="McClelland M."/>
            <person name="Sanderson E.K."/>
            <person name="Porwollik S."/>
            <person name="Spieth J."/>
            <person name="Clifton W.S."/>
            <person name="Fulton R."/>
            <person name="Cordes M."/>
            <person name="Wollam A."/>
            <person name="Shah N."/>
            <person name="Pepin K."/>
            <person name="Bhonagiri V."/>
            <person name="Nash W."/>
            <person name="Johnson M."/>
            <person name="Thiruvilangam P."/>
            <person name="Wilson R."/>
        </authorList>
    </citation>
    <scope>NUCLEOTIDE SEQUENCE [LARGE SCALE GENOMIC DNA]</scope>
    <source>
        <strain>ATCC BAA-1250 / SPB7</strain>
    </source>
</reference>
<protein>
    <recommendedName>
        <fullName evidence="1">Multidrug resistance protein MdtB</fullName>
    </recommendedName>
    <alternativeName>
        <fullName evidence="1">Multidrug transporter MdtB</fullName>
    </alternativeName>
</protein>
<gene>
    <name evidence="1" type="primary">mdtB</name>
    <name type="ordered locus">SPAB_00897</name>
</gene>
<accession>A9N7L2</accession>
<feature type="chain" id="PRO_1000087415" description="Multidrug resistance protein MdtB">
    <location>
        <begin position="1"/>
        <end position="1040"/>
    </location>
</feature>
<feature type="transmembrane region" description="Helical" evidence="1">
    <location>
        <begin position="25"/>
        <end position="45"/>
    </location>
</feature>
<feature type="transmembrane region" description="Helical" evidence="1">
    <location>
        <begin position="347"/>
        <end position="367"/>
    </location>
</feature>
<feature type="transmembrane region" description="Helical" evidence="1">
    <location>
        <begin position="369"/>
        <end position="389"/>
    </location>
</feature>
<feature type="transmembrane region" description="Helical" evidence="1">
    <location>
        <begin position="396"/>
        <end position="416"/>
    </location>
</feature>
<feature type="transmembrane region" description="Helical" evidence="1">
    <location>
        <begin position="440"/>
        <end position="460"/>
    </location>
</feature>
<feature type="transmembrane region" description="Helical" evidence="1">
    <location>
        <begin position="472"/>
        <end position="492"/>
    </location>
</feature>
<feature type="transmembrane region" description="Helical" evidence="1">
    <location>
        <begin position="537"/>
        <end position="557"/>
    </location>
</feature>
<feature type="transmembrane region" description="Helical" evidence="1">
    <location>
        <begin position="863"/>
        <end position="883"/>
    </location>
</feature>
<feature type="transmembrane region" description="Helical" evidence="1">
    <location>
        <begin position="888"/>
        <end position="908"/>
    </location>
</feature>
<feature type="transmembrane region" description="Helical" evidence="1">
    <location>
        <begin position="910"/>
        <end position="930"/>
    </location>
</feature>
<feature type="transmembrane region" description="Helical" evidence="1">
    <location>
        <begin position="968"/>
        <end position="988"/>
    </location>
</feature>
<feature type="transmembrane region" description="Helical" evidence="1">
    <location>
        <begin position="998"/>
        <end position="1018"/>
    </location>
</feature>